<proteinExistence type="inferred from homology"/>
<feature type="chain" id="PRO_1000117457" description="Shikimate kinase">
    <location>
        <begin position="1"/>
        <end position="165"/>
    </location>
</feature>
<feature type="binding site" evidence="1">
    <location>
        <begin position="12"/>
        <end position="17"/>
    </location>
    <ligand>
        <name>ATP</name>
        <dbReference type="ChEBI" id="CHEBI:30616"/>
    </ligand>
</feature>
<feature type="binding site" evidence="1">
    <location>
        <position position="16"/>
    </location>
    <ligand>
        <name>Mg(2+)</name>
        <dbReference type="ChEBI" id="CHEBI:18420"/>
    </ligand>
</feature>
<feature type="binding site" evidence="1">
    <location>
        <position position="34"/>
    </location>
    <ligand>
        <name>substrate</name>
    </ligand>
</feature>
<feature type="binding site" evidence="1">
    <location>
        <position position="57"/>
    </location>
    <ligand>
        <name>substrate</name>
    </ligand>
</feature>
<feature type="binding site" evidence="1">
    <location>
        <position position="79"/>
    </location>
    <ligand>
        <name>substrate</name>
    </ligand>
</feature>
<feature type="binding site" evidence="1">
    <location>
        <position position="116"/>
    </location>
    <ligand>
        <name>ATP</name>
        <dbReference type="ChEBI" id="CHEBI:30616"/>
    </ligand>
</feature>
<feature type="binding site" evidence="1">
    <location>
        <position position="133"/>
    </location>
    <ligand>
        <name>substrate</name>
    </ligand>
</feature>
<accession>B2TQ47</accession>
<organism>
    <name type="scientific">Clostridium botulinum (strain Eklund 17B / Type B)</name>
    <dbReference type="NCBI Taxonomy" id="935198"/>
    <lineage>
        <taxon>Bacteria</taxon>
        <taxon>Bacillati</taxon>
        <taxon>Bacillota</taxon>
        <taxon>Clostridia</taxon>
        <taxon>Eubacteriales</taxon>
        <taxon>Clostridiaceae</taxon>
        <taxon>Clostridium</taxon>
    </lineage>
</organism>
<comment type="function">
    <text evidence="1">Catalyzes the specific phosphorylation of the 3-hydroxyl group of shikimic acid using ATP as a cosubstrate.</text>
</comment>
<comment type="catalytic activity">
    <reaction evidence="1">
        <text>shikimate + ATP = 3-phosphoshikimate + ADP + H(+)</text>
        <dbReference type="Rhea" id="RHEA:13121"/>
        <dbReference type="ChEBI" id="CHEBI:15378"/>
        <dbReference type="ChEBI" id="CHEBI:30616"/>
        <dbReference type="ChEBI" id="CHEBI:36208"/>
        <dbReference type="ChEBI" id="CHEBI:145989"/>
        <dbReference type="ChEBI" id="CHEBI:456216"/>
        <dbReference type="EC" id="2.7.1.71"/>
    </reaction>
</comment>
<comment type="cofactor">
    <cofactor evidence="1">
        <name>Mg(2+)</name>
        <dbReference type="ChEBI" id="CHEBI:18420"/>
    </cofactor>
    <text evidence="1">Binds 1 Mg(2+) ion per subunit.</text>
</comment>
<comment type="pathway">
    <text evidence="1">Metabolic intermediate biosynthesis; chorismate biosynthesis; chorismate from D-erythrose 4-phosphate and phosphoenolpyruvate: step 5/7.</text>
</comment>
<comment type="subunit">
    <text evidence="1">Monomer.</text>
</comment>
<comment type="subcellular location">
    <subcellularLocation>
        <location evidence="1">Cytoplasm</location>
    </subcellularLocation>
</comment>
<comment type="similarity">
    <text evidence="1">Belongs to the shikimate kinase family.</text>
</comment>
<reference key="1">
    <citation type="submission" date="2008-04" db="EMBL/GenBank/DDBJ databases">
        <title>Complete sequence of Clostridium botulinum strain Eklund.</title>
        <authorList>
            <person name="Brinkac L.M."/>
            <person name="Brown J.L."/>
            <person name="Bruce D."/>
            <person name="Detter C."/>
            <person name="Munk C."/>
            <person name="Smith L.A."/>
            <person name="Smith T.J."/>
            <person name="Sutton G."/>
            <person name="Brettin T.S."/>
        </authorList>
    </citation>
    <scope>NUCLEOTIDE SEQUENCE [LARGE SCALE GENOMIC DNA]</scope>
    <source>
        <strain>Eklund 17B / Type B</strain>
    </source>
</reference>
<sequence length="165" mass="18714">MKNKIFLIGMPGCGKSTIGEIIAKELMLKFIDMDICIEEKTSKTISELFEQGEDYFRDIESETCKEIIKYDNVVIATGGGVVKKDINIETLKNNGLVIFIDRPVEKIISDIDVSRRPLLKNGKERIIGLYKERYDIYKKACHKIVVNGSTIDEVVGEIKKIIINN</sequence>
<name>AROK_CLOBB</name>
<evidence type="ECO:0000255" key="1">
    <source>
        <dbReference type="HAMAP-Rule" id="MF_00109"/>
    </source>
</evidence>
<protein>
    <recommendedName>
        <fullName evidence="1">Shikimate kinase</fullName>
        <shortName evidence="1">SK</shortName>
        <ecNumber evidence="1">2.7.1.71</ecNumber>
    </recommendedName>
</protein>
<gene>
    <name evidence="1" type="primary">aroK</name>
    <name type="ordered locus">CLL_A3138</name>
</gene>
<dbReference type="EC" id="2.7.1.71" evidence="1"/>
<dbReference type="EMBL" id="CP001056">
    <property type="protein sequence ID" value="ACD24123.1"/>
    <property type="molecule type" value="Genomic_DNA"/>
</dbReference>
<dbReference type="SMR" id="B2TQ47"/>
<dbReference type="KEGG" id="cbk:CLL_A3138"/>
<dbReference type="HOGENOM" id="CLU_057607_4_0_9"/>
<dbReference type="UniPathway" id="UPA00053">
    <property type="reaction ID" value="UER00088"/>
</dbReference>
<dbReference type="Proteomes" id="UP000001195">
    <property type="component" value="Chromosome"/>
</dbReference>
<dbReference type="GO" id="GO:0005829">
    <property type="term" value="C:cytosol"/>
    <property type="evidence" value="ECO:0007669"/>
    <property type="project" value="TreeGrafter"/>
</dbReference>
<dbReference type="GO" id="GO:0005524">
    <property type="term" value="F:ATP binding"/>
    <property type="evidence" value="ECO:0007669"/>
    <property type="project" value="UniProtKB-UniRule"/>
</dbReference>
<dbReference type="GO" id="GO:0000287">
    <property type="term" value="F:magnesium ion binding"/>
    <property type="evidence" value="ECO:0007669"/>
    <property type="project" value="UniProtKB-UniRule"/>
</dbReference>
<dbReference type="GO" id="GO:0004765">
    <property type="term" value="F:shikimate kinase activity"/>
    <property type="evidence" value="ECO:0007669"/>
    <property type="project" value="UniProtKB-UniRule"/>
</dbReference>
<dbReference type="GO" id="GO:0008652">
    <property type="term" value="P:amino acid biosynthetic process"/>
    <property type="evidence" value="ECO:0007669"/>
    <property type="project" value="UniProtKB-KW"/>
</dbReference>
<dbReference type="GO" id="GO:0009073">
    <property type="term" value="P:aromatic amino acid family biosynthetic process"/>
    <property type="evidence" value="ECO:0007669"/>
    <property type="project" value="UniProtKB-KW"/>
</dbReference>
<dbReference type="GO" id="GO:0009423">
    <property type="term" value="P:chorismate biosynthetic process"/>
    <property type="evidence" value="ECO:0007669"/>
    <property type="project" value="UniProtKB-UniRule"/>
</dbReference>
<dbReference type="CDD" id="cd00464">
    <property type="entry name" value="SK"/>
    <property type="match status" value="1"/>
</dbReference>
<dbReference type="Gene3D" id="3.40.50.300">
    <property type="entry name" value="P-loop containing nucleotide triphosphate hydrolases"/>
    <property type="match status" value="1"/>
</dbReference>
<dbReference type="HAMAP" id="MF_00109">
    <property type="entry name" value="Shikimate_kinase"/>
    <property type="match status" value="1"/>
</dbReference>
<dbReference type="InterPro" id="IPR027417">
    <property type="entry name" value="P-loop_NTPase"/>
</dbReference>
<dbReference type="InterPro" id="IPR031322">
    <property type="entry name" value="Shikimate/glucono_kinase"/>
</dbReference>
<dbReference type="InterPro" id="IPR000623">
    <property type="entry name" value="Shikimate_kinase/TSH1"/>
</dbReference>
<dbReference type="PANTHER" id="PTHR21087">
    <property type="entry name" value="SHIKIMATE KINASE"/>
    <property type="match status" value="1"/>
</dbReference>
<dbReference type="PANTHER" id="PTHR21087:SF16">
    <property type="entry name" value="SHIKIMATE KINASE 1, CHLOROPLASTIC"/>
    <property type="match status" value="1"/>
</dbReference>
<dbReference type="Pfam" id="PF01202">
    <property type="entry name" value="SKI"/>
    <property type="match status" value="1"/>
</dbReference>
<dbReference type="PRINTS" id="PR01100">
    <property type="entry name" value="SHIKIMTKNASE"/>
</dbReference>
<dbReference type="SUPFAM" id="SSF52540">
    <property type="entry name" value="P-loop containing nucleoside triphosphate hydrolases"/>
    <property type="match status" value="1"/>
</dbReference>
<keyword id="KW-0028">Amino-acid biosynthesis</keyword>
<keyword id="KW-0057">Aromatic amino acid biosynthesis</keyword>
<keyword id="KW-0067">ATP-binding</keyword>
<keyword id="KW-0963">Cytoplasm</keyword>
<keyword id="KW-0418">Kinase</keyword>
<keyword id="KW-0460">Magnesium</keyword>
<keyword id="KW-0479">Metal-binding</keyword>
<keyword id="KW-0547">Nucleotide-binding</keyword>
<keyword id="KW-0808">Transferase</keyword>